<feature type="chain" id="PRO_1000119537" description="1-deoxy-D-xylulose-5-phosphate synthase">
    <location>
        <begin position="1"/>
        <end position="630"/>
    </location>
</feature>
<feature type="binding site" evidence="1">
    <location>
        <position position="72"/>
    </location>
    <ligand>
        <name>thiamine diphosphate</name>
        <dbReference type="ChEBI" id="CHEBI:58937"/>
    </ligand>
</feature>
<feature type="binding site" evidence="1">
    <location>
        <begin position="113"/>
        <end position="115"/>
    </location>
    <ligand>
        <name>thiamine diphosphate</name>
        <dbReference type="ChEBI" id="CHEBI:58937"/>
    </ligand>
</feature>
<feature type="binding site" evidence="1">
    <location>
        <position position="144"/>
    </location>
    <ligand>
        <name>Mg(2+)</name>
        <dbReference type="ChEBI" id="CHEBI:18420"/>
    </ligand>
</feature>
<feature type="binding site" evidence="1">
    <location>
        <begin position="145"/>
        <end position="146"/>
    </location>
    <ligand>
        <name>thiamine diphosphate</name>
        <dbReference type="ChEBI" id="CHEBI:58937"/>
    </ligand>
</feature>
<feature type="binding site" evidence="1">
    <location>
        <position position="173"/>
    </location>
    <ligand>
        <name>Mg(2+)</name>
        <dbReference type="ChEBI" id="CHEBI:18420"/>
    </ligand>
</feature>
<feature type="binding site" evidence="1">
    <location>
        <position position="173"/>
    </location>
    <ligand>
        <name>thiamine diphosphate</name>
        <dbReference type="ChEBI" id="CHEBI:58937"/>
    </ligand>
</feature>
<feature type="binding site" evidence="1">
    <location>
        <position position="284"/>
    </location>
    <ligand>
        <name>thiamine diphosphate</name>
        <dbReference type="ChEBI" id="CHEBI:58937"/>
    </ligand>
</feature>
<feature type="binding site" evidence="1">
    <location>
        <position position="367"/>
    </location>
    <ligand>
        <name>thiamine diphosphate</name>
        <dbReference type="ChEBI" id="CHEBI:58937"/>
    </ligand>
</feature>
<organism>
    <name type="scientific">Bacillus cereus (strain AH820)</name>
    <dbReference type="NCBI Taxonomy" id="405535"/>
    <lineage>
        <taxon>Bacteria</taxon>
        <taxon>Bacillati</taxon>
        <taxon>Bacillota</taxon>
        <taxon>Bacilli</taxon>
        <taxon>Bacillales</taxon>
        <taxon>Bacillaceae</taxon>
        <taxon>Bacillus</taxon>
        <taxon>Bacillus cereus group</taxon>
    </lineage>
</organism>
<sequence length="630" mass="69427">MDLTQIQNPSFLKDMSISELEGLSEDIRKFLIEELSQTGGHIAPNLGVVELTIALHKLFDSPKDKFLWDVGHQSYVHKILTGRAKEFGTLRQYQGLCGFPKRCESEHDVWETGHSSTSLSAAMGMALARDLKKTKEYVIPIIGDGALTGGMALEALNHIGHEKTDMIVILNDNEMSIAPNVGALHNVLGRLRTAGKYHWVKDELEYILKKIPAVGGKVAATAEKIKDSLKYLLVSGVFFEELGFTYLGPVDGHDYEKLFETLQYAKKTKGPVLVHVITKKGKGYKPAESDVIGTWHGTGPYKIESGDFVKPKEVAPAWSAVVSETVLKLARTDERIVAITPAMPVGSKLEKFQKEFPDRMIDVGIAEQHATTMAAGMATQGMKPFLAIYSTFLQRAYDQVVHDICRQNLNVFIGIDRSGLVGADGETHQGVFDISFLRHLPNMVIMMPKDENEGQHLVYTAMQYEDGPIALRYARGNGLGVHMDEELKAIPIGSWETLKEGTQAAILTFGTTIPMAMEAAERLEKAGVSVKVVNARFIKPMDEAYLHDLLGKNIPILTIEEACLIGGFGTGVVEFASENGYHSALVERMGIPDRFIEHGSVTKLLEEIGLTTDAVVDRIHTMIPSKQKRA</sequence>
<accession>B7JM28</accession>
<proteinExistence type="inferred from homology"/>
<dbReference type="EC" id="2.2.1.7" evidence="1"/>
<dbReference type="EMBL" id="CP001283">
    <property type="protein sequence ID" value="ACK88884.1"/>
    <property type="molecule type" value="Genomic_DNA"/>
</dbReference>
<dbReference type="RefSeq" id="WP_000366447.1">
    <property type="nucleotide sequence ID" value="NC_011773.1"/>
</dbReference>
<dbReference type="SMR" id="B7JM28"/>
<dbReference type="GeneID" id="45024060"/>
<dbReference type="KEGG" id="bcu:BCAH820_4197"/>
<dbReference type="HOGENOM" id="CLU_009227_1_4_9"/>
<dbReference type="UniPathway" id="UPA00064">
    <property type="reaction ID" value="UER00091"/>
</dbReference>
<dbReference type="Proteomes" id="UP000001363">
    <property type="component" value="Chromosome"/>
</dbReference>
<dbReference type="GO" id="GO:0005829">
    <property type="term" value="C:cytosol"/>
    <property type="evidence" value="ECO:0007669"/>
    <property type="project" value="TreeGrafter"/>
</dbReference>
<dbReference type="GO" id="GO:0008661">
    <property type="term" value="F:1-deoxy-D-xylulose-5-phosphate synthase activity"/>
    <property type="evidence" value="ECO:0007669"/>
    <property type="project" value="UniProtKB-UniRule"/>
</dbReference>
<dbReference type="GO" id="GO:0000287">
    <property type="term" value="F:magnesium ion binding"/>
    <property type="evidence" value="ECO:0007669"/>
    <property type="project" value="UniProtKB-UniRule"/>
</dbReference>
<dbReference type="GO" id="GO:0030976">
    <property type="term" value="F:thiamine pyrophosphate binding"/>
    <property type="evidence" value="ECO:0007669"/>
    <property type="project" value="UniProtKB-UniRule"/>
</dbReference>
<dbReference type="GO" id="GO:0052865">
    <property type="term" value="P:1-deoxy-D-xylulose 5-phosphate biosynthetic process"/>
    <property type="evidence" value="ECO:0007669"/>
    <property type="project" value="UniProtKB-UniPathway"/>
</dbReference>
<dbReference type="GO" id="GO:0019288">
    <property type="term" value="P:isopentenyl diphosphate biosynthetic process, methylerythritol 4-phosphate pathway"/>
    <property type="evidence" value="ECO:0007669"/>
    <property type="project" value="TreeGrafter"/>
</dbReference>
<dbReference type="GO" id="GO:0016114">
    <property type="term" value="P:terpenoid biosynthetic process"/>
    <property type="evidence" value="ECO:0007669"/>
    <property type="project" value="UniProtKB-UniRule"/>
</dbReference>
<dbReference type="GO" id="GO:0009228">
    <property type="term" value="P:thiamine biosynthetic process"/>
    <property type="evidence" value="ECO:0007669"/>
    <property type="project" value="UniProtKB-UniRule"/>
</dbReference>
<dbReference type="CDD" id="cd02007">
    <property type="entry name" value="TPP_DXS"/>
    <property type="match status" value="1"/>
</dbReference>
<dbReference type="CDD" id="cd07033">
    <property type="entry name" value="TPP_PYR_DXS_TK_like"/>
    <property type="match status" value="1"/>
</dbReference>
<dbReference type="FunFam" id="3.40.50.920:FF:000002">
    <property type="entry name" value="1-deoxy-D-xylulose-5-phosphate synthase"/>
    <property type="match status" value="1"/>
</dbReference>
<dbReference type="FunFam" id="3.40.50.970:FF:000030">
    <property type="entry name" value="1-deoxy-D-xylulose-5-phosphate synthase"/>
    <property type="match status" value="1"/>
</dbReference>
<dbReference type="Gene3D" id="3.40.50.920">
    <property type="match status" value="1"/>
</dbReference>
<dbReference type="Gene3D" id="3.40.50.970">
    <property type="match status" value="2"/>
</dbReference>
<dbReference type="HAMAP" id="MF_00315">
    <property type="entry name" value="DXP_synth"/>
    <property type="match status" value="1"/>
</dbReference>
<dbReference type="InterPro" id="IPR005477">
    <property type="entry name" value="Dxylulose-5-P_synthase"/>
</dbReference>
<dbReference type="InterPro" id="IPR029061">
    <property type="entry name" value="THDP-binding"/>
</dbReference>
<dbReference type="InterPro" id="IPR009014">
    <property type="entry name" value="Transketo_C/PFOR_II"/>
</dbReference>
<dbReference type="InterPro" id="IPR005475">
    <property type="entry name" value="Transketolase-like_Pyr-bd"/>
</dbReference>
<dbReference type="InterPro" id="IPR020826">
    <property type="entry name" value="Transketolase_BS"/>
</dbReference>
<dbReference type="InterPro" id="IPR033248">
    <property type="entry name" value="Transketolase_C"/>
</dbReference>
<dbReference type="InterPro" id="IPR049557">
    <property type="entry name" value="Transketolase_CS"/>
</dbReference>
<dbReference type="NCBIfam" id="TIGR00204">
    <property type="entry name" value="dxs"/>
    <property type="match status" value="1"/>
</dbReference>
<dbReference type="NCBIfam" id="NF003933">
    <property type="entry name" value="PRK05444.2-2"/>
    <property type="match status" value="1"/>
</dbReference>
<dbReference type="PANTHER" id="PTHR43322">
    <property type="entry name" value="1-D-DEOXYXYLULOSE 5-PHOSPHATE SYNTHASE-RELATED"/>
    <property type="match status" value="1"/>
</dbReference>
<dbReference type="PANTHER" id="PTHR43322:SF5">
    <property type="entry name" value="1-DEOXY-D-XYLULOSE-5-PHOSPHATE SYNTHASE, CHLOROPLASTIC"/>
    <property type="match status" value="1"/>
</dbReference>
<dbReference type="Pfam" id="PF13292">
    <property type="entry name" value="DXP_synthase_N"/>
    <property type="match status" value="1"/>
</dbReference>
<dbReference type="Pfam" id="PF02779">
    <property type="entry name" value="Transket_pyr"/>
    <property type="match status" value="1"/>
</dbReference>
<dbReference type="Pfam" id="PF02780">
    <property type="entry name" value="Transketolase_C"/>
    <property type="match status" value="1"/>
</dbReference>
<dbReference type="SMART" id="SM00861">
    <property type="entry name" value="Transket_pyr"/>
    <property type="match status" value="1"/>
</dbReference>
<dbReference type="SUPFAM" id="SSF52518">
    <property type="entry name" value="Thiamin diphosphate-binding fold (THDP-binding)"/>
    <property type="match status" value="2"/>
</dbReference>
<dbReference type="SUPFAM" id="SSF52922">
    <property type="entry name" value="TK C-terminal domain-like"/>
    <property type="match status" value="1"/>
</dbReference>
<dbReference type="PROSITE" id="PS00801">
    <property type="entry name" value="TRANSKETOLASE_1"/>
    <property type="match status" value="1"/>
</dbReference>
<dbReference type="PROSITE" id="PS00802">
    <property type="entry name" value="TRANSKETOLASE_2"/>
    <property type="match status" value="1"/>
</dbReference>
<name>DXS_BACC0</name>
<comment type="function">
    <text evidence="1">Catalyzes the acyloin condensation reaction between C atoms 2 and 3 of pyruvate and glyceraldehyde 3-phosphate to yield 1-deoxy-D-xylulose-5-phosphate (DXP).</text>
</comment>
<comment type="catalytic activity">
    <reaction evidence="1">
        <text>D-glyceraldehyde 3-phosphate + pyruvate + H(+) = 1-deoxy-D-xylulose 5-phosphate + CO2</text>
        <dbReference type="Rhea" id="RHEA:12605"/>
        <dbReference type="ChEBI" id="CHEBI:15361"/>
        <dbReference type="ChEBI" id="CHEBI:15378"/>
        <dbReference type="ChEBI" id="CHEBI:16526"/>
        <dbReference type="ChEBI" id="CHEBI:57792"/>
        <dbReference type="ChEBI" id="CHEBI:59776"/>
        <dbReference type="EC" id="2.2.1.7"/>
    </reaction>
</comment>
<comment type="cofactor">
    <cofactor evidence="1">
        <name>Mg(2+)</name>
        <dbReference type="ChEBI" id="CHEBI:18420"/>
    </cofactor>
    <text evidence="1">Binds 1 Mg(2+) ion per subunit.</text>
</comment>
<comment type="cofactor">
    <cofactor evidence="1">
        <name>thiamine diphosphate</name>
        <dbReference type="ChEBI" id="CHEBI:58937"/>
    </cofactor>
    <text evidence="1">Binds 1 thiamine pyrophosphate per subunit.</text>
</comment>
<comment type="pathway">
    <text evidence="1">Metabolic intermediate biosynthesis; 1-deoxy-D-xylulose 5-phosphate biosynthesis; 1-deoxy-D-xylulose 5-phosphate from D-glyceraldehyde 3-phosphate and pyruvate: step 1/1.</text>
</comment>
<comment type="subunit">
    <text evidence="1">Homodimer.</text>
</comment>
<comment type="similarity">
    <text evidence="1">Belongs to the transketolase family. DXPS subfamily.</text>
</comment>
<protein>
    <recommendedName>
        <fullName evidence="1">1-deoxy-D-xylulose-5-phosphate synthase</fullName>
        <ecNumber evidence="1">2.2.1.7</ecNumber>
    </recommendedName>
    <alternativeName>
        <fullName evidence="1">1-deoxyxylulose-5-phosphate synthase</fullName>
        <shortName evidence="1">DXP synthase</shortName>
        <shortName evidence="1">DXPS</shortName>
    </alternativeName>
</protein>
<reference key="1">
    <citation type="submission" date="2008-10" db="EMBL/GenBank/DDBJ databases">
        <title>Genome sequence of Bacillus cereus AH820.</title>
        <authorList>
            <person name="Dodson R.J."/>
            <person name="Durkin A.S."/>
            <person name="Rosovitz M.J."/>
            <person name="Rasko D.A."/>
            <person name="Hoffmaster A."/>
            <person name="Ravel J."/>
            <person name="Sutton G."/>
        </authorList>
    </citation>
    <scope>NUCLEOTIDE SEQUENCE [LARGE SCALE GENOMIC DNA]</scope>
    <source>
        <strain>AH820</strain>
    </source>
</reference>
<gene>
    <name evidence="1" type="primary">dxs</name>
    <name type="ordered locus">BCAH820_4197</name>
</gene>
<evidence type="ECO:0000255" key="1">
    <source>
        <dbReference type="HAMAP-Rule" id="MF_00315"/>
    </source>
</evidence>
<keyword id="KW-0414">Isoprene biosynthesis</keyword>
<keyword id="KW-0460">Magnesium</keyword>
<keyword id="KW-0479">Metal-binding</keyword>
<keyword id="KW-0784">Thiamine biosynthesis</keyword>
<keyword id="KW-0786">Thiamine pyrophosphate</keyword>
<keyword id="KW-0808">Transferase</keyword>